<accession>P15469</accession>
<name>GLB3_LAMSP</name>
<comment type="subunit">
    <text>Giant hemoglobin is composed of four heme-containing chains (AI to AIV), and two linker chains (AV and AVI).</text>
</comment>
<comment type="similarity">
    <text evidence="1">Belongs to the globin family.</text>
</comment>
<dbReference type="PIR" id="S01815">
    <property type="entry name" value="S01815"/>
</dbReference>
<dbReference type="PIR" id="S08284">
    <property type="entry name" value="S08284"/>
</dbReference>
<dbReference type="SMR" id="P15469"/>
<dbReference type="GO" id="GO:0005576">
    <property type="term" value="C:extracellular region"/>
    <property type="evidence" value="ECO:0007669"/>
    <property type="project" value="InterPro"/>
</dbReference>
<dbReference type="GO" id="GO:0005833">
    <property type="term" value="C:hemoglobin complex"/>
    <property type="evidence" value="ECO:0007669"/>
    <property type="project" value="InterPro"/>
</dbReference>
<dbReference type="GO" id="GO:0020037">
    <property type="term" value="F:heme binding"/>
    <property type="evidence" value="ECO:0007669"/>
    <property type="project" value="InterPro"/>
</dbReference>
<dbReference type="GO" id="GO:0005506">
    <property type="term" value="F:iron ion binding"/>
    <property type="evidence" value="ECO:0007669"/>
    <property type="project" value="InterPro"/>
</dbReference>
<dbReference type="GO" id="GO:0019825">
    <property type="term" value="F:oxygen binding"/>
    <property type="evidence" value="ECO:0007669"/>
    <property type="project" value="InterPro"/>
</dbReference>
<dbReference type="GO" id="GO:0005344">
    <property type="term" value="F:oxygen carrier activity"/>
    <property type="evidence" value="ECO:0007669"/>
    <property type="project" value="UniProtKB-KW"/>
</dbReference>
<dbReference type="CDD" id="cd01040">
    <property type="entry name" value="Mb-like"/>
    <property type="match status" value="1"/>
</dbReference>
<dbReference type="Gene3D" id="1.10.490.10">
    <property type="entry name" value="Globins"/>
    <property type="match status" value="1"/>
</dbReference>
<dbReference type="InterPro" id="IPR002336">
    <property type="entry name" value="Erythrocruorin"/>
</dbReference>
<dbReference type="InterPro" id="IPR000971">
    <property type="entry name" value="Globin"/>
</dbReference>
<dbReference type="InterPro" id="IPR050532">
    <property type="entry name" value="Globin-like_OT"/>
</dbReference>
<dbReference type="InterPro" id="IPR009050">
    <property type="entry name" value="Globin-like_sf"/>
</dbReference>
<dbReference type="InterPro" id="IPR012292">
    <property type="entry name" value="Globin/Proto"/>
</dbReference>
<dbReference type="InterPro" id="IPR014610">
    <property type="entry name" value="Haemoglobin_extracell"/>
</dbReference>
<dbReference type="InterPro" id="IPR044399">
    <property type="entry name" value="Mb-like_M"/>
</dbReference>
<dbReference type="PANTHER" id="PTHR46458">
    <property type="entry name" value="BLR2807 PROTEIN"/>
    <property type="match status" value="1"/>
</dbReference>
<dbReference type="PANTHER" id="PTHR46458:SF1">
    <property type="entry name" value="GEO09476P1"/>
    <property type="match status" value="1"/>
</dbReference>
<dbReference type="Pfam" id="PF00042">
    <property type="entry name" value="Globin"/>
    <property type="match status" value="1"/>
</dbReference>
<dbReference type="PIRSF" id="PIRSF036517">
    <property type="entry name" value="Ext_hemo"/>
    <property type="match status" value="1"/>
</dbReference>
<dbReference type="PRINTS" id="PR00611">
    <property type="entry name" value="ERYTHCRUORIN"/>
</dbReference>
<dbReference type="SUPFAM" id="SSF46458">
    <property type="entry name" value="Globin-like"/>
    <property type="match status" value="1"/>
</dbReference>
<dbReference type="PROSITE" id="PS01033">
    <property type="entry name" value="GLOBIN"/>
    <property type="match status" value="1"/>
</dbReference>
<sequence>YECGPLQRLKVKRQWAEAYGSGNDREEFGHFIWTHVFKDAPSARDLFKRVRGDNIHTPAFRAHATRVLGGLDMCIALLDDEGVLNTQLAHLASQHSSRGVSAAQYDVVEHSVMMGVEHEIGQNVFDKDAWQACLDVITGGIQGN</sequence>
<keyword id="KW-0903">Direct protein sequencing</keyword>
<keyword id="KW-0349">Heme</keyword>
<keyword id="KW-0408">Iron</keyword>
<keyword id="KW-0479">Metal-binding</keyword>
<keyword id="KW-0561">Oxygen transport</keyword>
<keyword id="KW-0813">Transport</keyword>
<proteinExistence type="evidence at protein level"/>
<organism>
    <name type="scientific">Lamellibrachia sp.</name>
    <name type="common">Deep-sea giant tube worm</name>
    <dbReference type="NCBI Taxonomy" id="6424"/>
    <lineage>
        <taxon>Eukaryota</taxon>
        <taxon>Metazoa</taxon>
        <taxon>Spiralia</taxon>
        <taxon>Lophotrochozoa</taxon>
        <taxon>Annelida</taxon>
        <taxon>Polychaeta</taxon>
        <taxon>Sedentaria</taxon>
        <taxon>Canalipalpata</taxon>
        <taxon>Sabellida</taxon>
        <taxon>Siboglinidae</taxon>
        <taxon>Lamellibrachia</taxon>
    </lineage>
</organism>
<feature type="chain" id="PRO_0000052521" description="Giant hemoglobin AIII chain">
    <location>
        <begin position="1"/>
        <end position="144"/>
    </location>
</feature>
<feature type="domain" description="Globin" evidence="1">
    <location>
        <begin position="2"/>
        <end position="144"/>
    </location>
</feature>
<feature type="binding site" description="proximal binding residue" evidence="1">
    <location>
        <position position="95"/>
    </location>
    <ligand>
        <name>heme b</name>
        <dbReference type="ChEBI" id="CHEBI:60344"/>
    </ligand>
    <ligandPart>
        <name>Fe</name>
        <dbReference type="ChEBI" id="CHEBI:18248"/>
    </ligandPart>
</feature>
<reference key="1">
    <citation type="journal article" date="1990" name="Biochem. J.">
        <title>Primary structure of a constituent polypeptide chain (AIII) of the giant haemoglobin from the deep-sea tube worm Lamellibrachia. A possible H2S-binding site.</title>
        <authorList>
            <person name="Suzuki T."/>
            <person name="Takagi T."/>
            <person name="Ohta S."/>
        </authorList>
    </citation>
    <scope>PROTEIN SEQUENCE</scope>
</reference>
<reference key="2">
    <citation type="journal article" date="1988" name="Biochem. J.">
        <title>N-terminal amino acid sequence of the deep-sea tube worm haemoglobin remarkably resembles that of annelid haemoglobin.</title>
        <authorList>
            <person name="Suzuki T."/>
            <person name="Takagi T."/>
            <person name="Ohta S."/>
        </authorList>
    </citation>
    <scope>PROTEIN SEQUENCE OF 1-24</scope>
</reference>
<evidence type="ECO:0000255" key="1">
    <source>
        <dbReference type="PROSITE-ProRule" id="PRU00238"/>
    </source>
</evidence>
<protein>
    <recommendedName>
        <fullName>Giant hemoglobin AIII chain</fullName>
    </recommendedName>
</protein>